<comment type="function">
    <text evidence="1">Possesses a potent antimicrobial activity against Gram-positive and Gram-negative bacteria. Probably acts by disturbing membrane functions with its amphipathic structure (By similarity).</text>
</comment>
<comment type="interaction">
    <interactant intactId="EBI-7249529">
        <id>O93455</id>
    </interactant>
    <interactant intactId="EBI-7249529">
        <id>O93455</id>
        <label>-</label>
    </interactant>
    <organismsDiffer>false</organismsDiffer>
    <experiments>5</experiments>
</comment>
<comment type="subcellular location">
    <subcellularLocation>
        <location evidence="5">Secreted</location>
    </subcellularLocation>
</comment>
<comment type="tissue specificity">
    <text evidence="5">Expressed by the skin glands.</text>
</comment>
<comment type="online information" name="The antimicrobial peptide database">
    <link uri="https://wangapd3.com/database/query_output.php?ID=1386"/>
</comment>
<evidence type="ECO:0000250" key="1"/>
<evidence type="ECO:0000255" key="2"/>
<evidence type="ECO:0000303" key="3">
    <source>
    </source>
</evidence>
<evidence type="ECO:0000305" key="4"/>
<evidence type="ECO:0000305" key="5">
    <source>
    </source>
</evidence>
<keyword id="KW-0878">Amphibian defense peptide</keyword>
<keyword id="KW-0044">Antibiotic</keyword>
<keyword id="KW-0929">Antimicrobial</keyword>
<keyword id="KW-0165">Cleavage on pair of basic residues</keyword>
<keyword id="KW-0964">Secreted</keyword>
<keyword id="KW-0732">Signal</keyword>
<name>DRU_AGADC</name>
<proteinExistence type="evidence at protein level"/>
<organism>
    <name type="scientific">Agalychnis dacnicolor</name>
    <name type="common">Giant Mexican leaf frog</name>
    <name type="synonym">Pachymedusa dacnicolor</name>
    <dbReference type="NCBI Taxonomy" id="75988"/>
    <lineage>
        <taxon>Eukaryota</taxon>
        <taxon>Metazoa</taxon>
        <taxon>Chordata</taxon>
        <taxon>Craniata</taxon>
        <taxon>Vertebrata</taxon>
        <taxon>Euteleostomi</taxon>
        <taxon>Amphibia</taxon>
        <taxon>Batrachia</taxon>
        <taxon>Anura</taxon>
        <taxon>Neobatrachia</taxon>
        <taxon>Hyloidea</taxon>
        <taxon>Hylidae</taxon>
        <taxon>Phyllomedusinae</taxon>
        <taxon>Agalychnis</taxon>
    </lineage>
</organism>
<sequence length="66" mass="7399">MSFMKKSLLLVLFLGVVSLSNCEEEKGENENEDHEEHHEEKRLLGDLLGQTSKLVNDLTDTVGSIV</sequence>
<accession>O93455</accession>
<dbReference type="EMBL" id="AJ005193">
    <property type="protein sequence ID" value="CAA06430.1"/>
    <property type="molecule type" value="mRNA"/>
</dbReference>
<dbReference type="MINT" id="O93455"/>
<dbReference type="GO" id="GO:0005576">
    <property type="term" value="C:extracellular region"/>
    <property type="evidence" value="ECO:0007669"/>
    <property type="project" value="UniProtKB-SubCell"/>
</dbReference>
<dbReference type="GO" id="GO:0042802">
    <property type="term" value="F:identical protein binding"/>
    <property type="evidence" value="ECO:0000353"/>
    <property type="project" value="IntAct"/>
</dbReference>
<dbReference type="GO" id="GO:0042742">
    <property type="term" value="P:defense response to bacterium"/>
    <property type="evidence" value="ECO:0007669"/>
    <property type="project" value="UniProtKB-KW"/>
</dbReference>
<dbReference type="InterPro" id="IPR004275">
    <property type="entry name" value="Frog_antimicrobial_propeptide"/>
</dbReference>
<dbReference type="Pfam" id="PF03032">
    <property type="entry name" value="FSAP_sig_propep"/>
    <property type="match status" value="1"/>
</dbReference>
<reference key="1">
    <citation type="journal article" date="1998" name="Biochim. Biophys. Acta">
        <title>Cloning of cDNAs encoding new peptides of the dermaseptin-family.</title>
        <authorList>
            <person name="Wechselberger C."/>
        </authorList>
    </citation>
    <scope>NUCLEOTIDE SEQUENCE [MRNA]</scope>
    <source>
        <tissue>Skin</tissue>
    </source>
</reference>
<feature type="signal peptide" evidence="2">
    <location>
        <begin position="1"/>
        <end position="22"/>
    </location>
</feature>
<feature type="propeptide" id="PRO_0000007087" evidence="4">
    <location>
        <begin position="23"/>
        <end position="40"/>
    </location>
</feature>
<feature type="peptide" id="PRO_0000007088" description="Dermaseptin PD-3-7" evidence="5">
    <location>
        <begin position="43"/>
        <end position="66"/>
    </location>
</feature>
<protein>
    <recommendedName>
        <fullName evidence="3">Dermaseptin PD-3-7</fullName>
    </recommendedName>
</protein>